<sequence length="371" mass="40445">MAEPVNNLIDLLLNDNIKGLKPYESARRLFSGAGNKQQVWLNANESPFANDFTIDAERFNRYPDCQPPAVIDAYAAYAGVQPEQLLVSRGADEGIELLIRAFCTPGKDSVLICPPTYGMYAISAETCDVGIERAGLNDDFSLNVDAIKAFKGKVNLVFICSPNNPTGTSVDKNQLLEVVEHFADSAIVVIDEAYIEFDKDNSWAAELTHYPNIAILRTLSKAFALAGLRCGFTLAQAPVIQALMKVIAPYPIPEPVAQIAAQALSSEGLVTLEQQVAVINQEKALLKSALAEIADVELVGDDKANFILFRTPQKSALMSHLVASGILIRDQSKQINLDNCLRITVGSPEQNKQLLSEISRFFTLQTSTQEA</sequence>
<reference key="1">
    <citation type="submission" date="2006-06" db="EMBL/GenBank/DDBJ databases">
        <title>Complete sequence of Pseudoalteromonas atlantica T6c.</title>
        <authorList>
            <consortium name="US DOE Joint Genome Institute"/>
            <person name="Copeland A."/>
            <person name="Lucas S."/>
            <person name="Lapidus A."/>
            <person name="Barry K."/>
            <person name="Detter J.C."/>
            <person name="Glavina del Rio T."/>
            <person name="Hammon N."/>
            <person name="Israni S."/>
            <person name="Dalin E."/>
            <person name="Tice H."/>
            <person name="Pitluck S."/>
            <person name="Saunders E."/>
            <person name="Brettin T."/>
            <person name="Bruce D."/>
            <person name="Han C."/>
            <person name="Tapia R."/>
            <person name="Gilna P."/>
            <person name="Schmutz J."/>
            <person name="Larimer F."/>
            <person name="Land M."/>
            <person name="Hauser L."/>
            <person name="Kyrpides N."/>
            <person name="Kim E."/>
            <person name="Karls A.C."/>
            <person name="Bartlett D."/>
            <person name="Higgins B.P."/>
            <person name="Richardson P."/>
        </authorList>
    </citation>
    <scope>NUCLEOTIDE SEQUENCE [LARGE SCALE GENOMIC DNA]</scope>
    <source>
        <strain>T6c / ATCC BAA-1087</strain>
    </source>
</reference>
<protein>
    <recommendedName>
        <fullName evidence="1">Histidinol-phosphate aminotransferase</fullName>
        <ecNumber evidence="1">2.6.1.9</ecNumber>
    </recommendedName>
    <alternativeName>
        <fullName evidence="1">Imidazole acetol-phosphate transaminase</fullName>
    </alternativeName>
</protein>
<keyword id="KW-0028">Amino-acid biosynthesis</keyword>
<keyword id="KW-0032">Aminotransferase</keyword>
<keyword id="KW-0368">Histidine biosynthesis</keyword>
<keyword id="KW-0663">Pyridoxal phosphate</keyword>
<keyword id="KW-0808">Transferase</keyword>
<comment type="catalytic activity">
    <reaction evidence="1">
        <text>L-histidinol phosphate + 2-oxoglutarate = 3-(imidazol-4-yl)-2-oxopropyl phosphate + L-glutamate</text>
        <dbReference type="Rhea" id="RHEA:23744"/>
        <dbReference type="ChEBI" id="CHEBI:16810"/>
        <dbReference type="ChEBI" id="CHEBI:29985"/>
        <dbReference type="ChEBI" id="CHEBI:57766"/>
        <dbReference type="ChEBI" id="CHEBI:57980"/>
        <dbReference type="EC" id="2.6.1.9"/>
    </reaction>
</comment>
<comment type="cofactor">
    <cofactor evidence="1">
        <name>pyridoxal 5'-phosphate</name>
        <dbReference type="ChEBI" id="CHEBI:597326"/>
    </cofactor>
</comment>
<comment type="pathway">
    <text evidence="1">Amino-acid biosynthesis; L-histidine biosynthesis; L-histidine from 5-phospho-alpha-D-ribose 1-diphosphate: step 7/9.</text>
</comment>
<comment type="subunit">
    <text evidence="1">Homodimer.</text>
</comment>
<comment type="similarity">
    <text evidence="1">Belongs to the class-II pyridoxal-phosphate-dependent aminotransferase family. Histidinol-phosphate aminotransferase subfamily.</text>
</comment>
<gene>
    <name evidence="1" type="primary">hisC</name>
    <name type="ordered locus">Patl_2882</name>
</gene>
<feature type="chain" id="PRO_0000319783" description="Histidinol-phosphate aminotransferase">
    <location>
        <begin position="1"/>
        <end position="371"/>
    </location>
</feature>
<feature type="modified residue" description="N6-(pyridoxal phosphate)lysine" evidence="1">
    <location>
        <position position="221"/>
    </location>
</feature>
<accession>Q15RU8</accession>
<organism>
    <name type="scientific">Pseudoalteromonas atlantica (strain T6c / ATCC BAA-1087)</name>
    <dbReference type="NCBI Taxonomy" id="3042615"/>
    <lineage>
        <taxon>Bacteria</taxon>
        <taxon>Pseudomonadati</taxon>
        <taxon>Pseudomonadota</taxon>
        <taxon>Gammaproteobacteria</taxon>
        <taxon>Alteromonadales</taxon>
        <taxon>Alteromonadaceae</taxon>
        <taxon>Paraglaciecola</taxon>
    </lineage>
</organism>
<dbReference type="EC" id="2.6.1.9" evidence="1"/>
<dbReference type="EMBL" id="CP000388">
    <property type="protein sequence ID" value="ABG41390.1"/>
    <property type="molecule type" value="Genomic_DNA"/>
</dbReference>
<dbReference type="RefSeq" id="WP_011575647.1">
    <property type="nucleotide sequence ID" value="NC_008228.1"/>
</dbReference>
<dbReference type="SMR" id="Q15RU8"/>
<dbReference type="STRING" id="342610.Patl_2882"/>
<dbReference type="KEGG" id="pat:Patl_2882"/>
<dbReference type="eggNOG" id="COG0079">
    <property type="taxonomic scope" value="Bacteria"/>
</dbReference>
<dbReference type="HOGENOM" id="CLU_017584_3_1_6"/>
<dbReference type="OrthoDB" id="9813612at2"/>
<dbReference type="UniPathway" id="UPA00031">
    <property type="reaction ID" value="UER00012"/>
</dbReference>
<dbReference type="Proteomes" id="UP000001981">
    <property type="component" value="Chromosome"/>
</dbReference>
<dbReference type="GO" id="GO:0004400">
    <property type="term" value="F:histidinol-phosphate transaminase activity"/>
    <property type="evidence" value="ECO:0007669"/>
    <property type="project" value="UniProtKB-UniRule"/>
</dbReference>
<dbReference type="GO" id="GO:0030170">
    <property type="term" value="F:pyridoxal phosphate binding"/>
    <property type="evidence" value="ECO:0007669"/>
    <property type="project" value="InterPro"/>
</dbReference>
<dbReference type="GO" id="GO:0000105">
    <property type="term" value="P:L-histidine biosynthetic process"/>
    <property type="evidence" value="ECO:0007669"/>
    <property type="project" value="UniProtKB-UniRule"/>
</dbReference>
<dbReference type="CDD" id="cd00609">
    <property type="entry name" value="AAT_like"/>
    <property type="match status" value="1"/>
</dbReference>
<dbReference type="Gene3D" id="3.90.1150.10">
    <property type="entry name" value="Aspartate Aminotransferase, domain 1"/>
    <property type="match status" value="1"/>
</dbReference>
<dbReference type="Gene3D" id="3.40.640.10">
    <property type="entry name" value="Type I PLP-dependent aspartate aminotransferase-like (Major domain)"/>
    <property type="match status" value="1"/>
</dbReference>
<dbReference type="HAMAP" id="MF_01023">
    <property type="entry name" value="HisC_aminotrans_2"/>
    <property type="match status" value="1"/>
</dbReference>
<dbReference type="InterPro" id="IPR001917">
    <property type="entry name" value="Aminotrans_II_pyridoxalP_BS"/>
</dbReference>
<dbReference type="InterPro" id="IPR004839">
    <property type="entry name" value="Aminotransferase_I/II_large"/>
</dbReference>
<dbReference type="InterPro" id="IPR005861">
    <property type="entry name" value="HisP_aminotrans"/>
</dbReference>
<dbReference type="InterPro" id="IPR015424">
    <property type="entry name" value="PyrdxlP-dep_Trfase"/>
</dbReference>
<dbReference type="InterPro" id="IPR015421">
    <property type="entry name" value="PyrdxlP-dep_Trfase_major"/>
</dbReference>
<dbReference type="InterPro" id="IPR015422">
    <property type="entry name" value="PyrdxlP-dep_Trfase_small"/>
</dbReference>
<dbReference type="NCBIfam" id="TIGR01141">
    <property type="entry name" value="hisC"/>
    <property type="match status" value="1"/>
</dbReference>
<dbReference type="PANTHER" id="PTHR42885:SF2">
    <property type="entry name" value="HISTIDINOL-PHOSPHATE AMINOTRANSFERASE"/>
    <property type="match status" value="1"/>
</dbReference>
<dbReference type="PANTHER" id="PTHR42885">
    <property type="entry name" value="HISTIDINOL-PHOSPHATE AMINOTRANSFERASE-RELATED"/>
    <property type="match status" value="1"/>
</dbReference>
<dbReference type="Pfam" id="PF00155">
    <property type="entry name" value="Aminotran_1_2"/>
    <property type="match status" value="1"/>
</dbReference>
<dbReference type="SUPFAM" id="SSF53383">
    <property type="entry name" value="PLP-dependent transferases"/>
    <property type="match status" value="1"/>
</dbReference>
<dbReference type="PROSITE" id="PS00599">
    <property type="entry name" value="AA_TRANSFER_CLASS_2"/>
    <property type="match status" value="1"/>
</dbReference>
<evidence type="ECO:0000255" key="1">
    <source>
        <dbReference type="HAMAP-Rule" id="MF_01023"/>
    </source>
</evidence>
<proteinExistence type="inferred from homology"/>
<name>HIS8_PSEA6</name>